<name>NUON_ECOL6</name>
<dbReference type="EC" id="7.1.1.-" evidence="1"/>
<dbReference type="EMBL" id="AE014075">
    <property type="protein sequence ID" value="AAN81271.1"/>
    <property type="molecule type" value="Genomic_DNA"/>
</dbReference>
<dbReference type="RefSeq" id="WP_000156712.1">
    <property type="nucleotide sequence ID" value="NZ_CP051263.1"/>
</dbReference>
<dbReference type="SMR" id="Q8FFK3"/>
<dbReference type="STRING" id="199310.c2817"/>
<dbReference type="KEGG" id="ecc:c2817"/>
<dbReference type="eggNOG" id="COG1007">
    <property type="taxonomic scope" value="Bacteria"/>
</dbReference>
<dbReference type="HOGENOM" id="CLU_007100_1_5_6"/>
<dbReference type="BioCyc" id="ECOL199310:C2817-MONOMER"/>
<dbReference type="Proteomes" id="UP000001410">
    <property type="component" value="Chromosome"/>
</dbReference>
<dbReference type="GO" id="GO:0005886">
    <property type="term" value="C:plasma membrane"/>
    <property type="evidence" value="ECO:0007669"/>
    <property type="project" value="UniProtKB-SubCell"/>
</dbReference>
<dbReference type="GO" id="GO:0008137">
    <property type="term" value="F:NADH dehydrogenase (ubiquinone) activity"/>
    <property type="evidence" value="ECO:0007669"/>
    <property type="project" value="InterPro"/>
</dbReference>
<dbReference type="GO" id="GO:0050136">
    <property type="term" value="F:NADH:ubiquinone reductase (non-electrogenic) activity"/>
    <property type="evidence" value="ECO:0007669"/>
    <property type="project" value="UniProtKB-UniRule"/>
</dbReference>
<dbReference type="GO" id="GO:0048038">
    <property type="term" value="F:quinone binding"/>
    <property type="evidence" value="ECO:0007669"/>
    <property type="project" value="UniProtKB-KW"/>
</dbReference>
<dbReference type="GO" id="GO:0042773">
    <property type="term" value="P:ATP synthesis coupled electron transport"/>
    <property type="evidence" value="ECO:0007669"/>
    <property type="project" value="InterPro"/>
</dbReference>
<dbReference type="HAMAP" id="MF_00445">
    <property type="entry name" value="NDH1_NuoN_1"/>
    <property type="match status" value="1"/>
</dbReference>
<dbReference type="InterPro" id="IPR010096">
    <property type="entry name" value="NADH-Q_OxRdtase_suN/2"/>
</dbReference>
<dbReference type="InterPro" id="IPR001750">
    <property type="entry name" value="ND/Mrp_TM"/>
</dbReference>
<dbReference type="NCBIfam" id="TIGR01770">
    <property type="entry name" value="NDH_I_N"/>
    <property type="match status" value="1"/>
</dbReference>
<dbReference type="NCBIfam" id="NF004439">
    <property type="entry name" value="PRK05777.1-1"/>
    <property type="match status" value="1"/>
</dbReference>
<dbReference type="PANTHER" id="PTHR22773">
    <property type="entry name" value="NADH DEHYDROGENASE"/>
    <property type="match status" value="1"/>
</dbReference>
<dbReference type="Pfam" id="PF00361">
    <property type="entry name" value="Proton_antipo_M"/>
    <property type="match status" value="1"/>
</dbReference>
<feature type="chain" id="PRO_0000249441" description="NADH-quinone oxidoreductase subunit N">
    <location>
        <begin position="1"/>
        <end position="485"/>
    </location>
</feature>
<feature type="transmembrane region" description="Helical" evidence="1">
    <location>
        <begin position="8"/>
        <end position="28"/>
    </location>
</feature>
<feature type="transmembrane region" description="Helical" evidence="1">
    <location>
        <begin position="35"/>
        <end position="55"/>
    </location>
</feature>
<feature type="transmembrane region" description="Helical" evidence="1">
    <location>
        <begin position="71"/>
        <end position="91"/>
    </location>
</feature>
<feature type="transmembrane region" description="Helical" evidence="1">
    <location>
        <begin position="105"/>
        <end position="125"/>
    </location>
</feature>
<feature type="transmembrane region" description="Helical" evidence="1">
    <location>
        <begin position="127"/>
        <end position="147"/>
    </location>
</feature>
<feature type="transmembrane region" description="Helical" evidence="1">
    <location>
        <begin position="159"/>
        <end position="179"/>
    </location>
</feature>
<feature type="transmembrane region" description="Helical" evidence="1">
    <location>
        <begin position="203"/>
        <end position="223"/>
    </location>
</feature>
<feature type="transmembrane region" description="Helical" evidence="1">
    <location>
        <begin position="235"/>
        <end position="255"/>
    </location>
</feature>
<feature type="transmembrane region" description="Helical" evidence="1">
    <location>
        <begin position="271"/>
        <end position="291"/>
    </location>
</feature>
<feature type="transmembrane region" description="Helical" evidence="1">
    <location>
        <begin position="297"/>
        <end position="317"/>
    </location>
</feature>
<feature type="transmembrane region" description="Helical" evidence="1">
    <location>
        <begin position="326"/>
        <end position="346"/>
    </location>
</feature>
<feature type="transmembrane region" description="Helical" evidence="1">
    <location>
        <begin position="373"/>
        <end position="393"/>
    </location>
</feature>
<feature type="transmembrane region" description="Helical" evidence="1">
    <location>
        <begin position="408"/>
        <end position="430"/>
    </location>
</feature>
<feature type="transmembrane region" description="Helical" evidence="1">
    <location>
        <begin position="455"/>
        <end position="475"/>
    </location>
</feature>
<proteinExistence type="inferred from homology"/>
<comment type="function">
    <text evidence="1">NDH-1 shuttles electrons from NADH, via FMN and iron-sulfur (Fe-S) centers, to quinones in the respiratory chain. The immediate electron acceptor for the enzyme in this species is believed to be ubiquinone. Couples the redox reaction to proton translocation (for every two electrons transferred, four hydrogen ions are translocated across the cytoplasmic membrane), and thus conserves the redox energy in a proton gradient.</text>
</comment>
<comment type="catalytic activity">
    <reaction evidence="1">
        <text>a quinone + NADH + 5 H(+)(in) = a quinol + NAD(+) + 4 H(+)(out)</text>
        <dbReference type="Rhea" id="RHEA:57888"/>
        <dbReference type="ChEBI" id="CHEBI:15378"/>
        <dbReference type="ChEBI" id="CHEBI:24646"/>
        <dbReference type="ChEBI" id="CHEBI:57540"/>
        <dbReference type="ChEBI" id="CHEBI:57945"/>
        <dbReference type="ChEBI" id="CHEBI:132124"/>
    </reaction>
</comment>
<comment type="subunit">
    <text evidence="1">NDH-1 is composed of 13 different subunits. Subunits NuoA, H, J, K, L, M, N constitute the membrane sector of the complex.</text>
</comment>
<comment type="subcellular location">
    <subcellularLocation>
        <location evidence="1">Cell inner membrane</location>
        <topology evidence="1">Multi-pass membrane protein</topology>
    </subcellularLocation>
</comment>
<comment type="similarity">
    <text evidence="1">Belongs to the complex I subunit 2 family.</text>
</comment>
<gene>
    <name evidence="1" type="primary">nuoN</name>
    <name type="ordered locus">c2817</name>
</gene>
<accession>Q8FFK3</accession>
<reference key="1">
    <citation type="journal article" date="2002" name="Proc. Natl. Acad. Sci. U.S.A.">
        <title>Extensive mosaic structure revealed by the complete genome sequence of uropathogenic Escherichia coli.</title>
        <authorList>
            <person name="Welch R.A."/>
            <person name="Burland V."/>
            <person name="Plunkett G. III"/>
            <person name="Redford P."/>
            <person name="Roesch P."/>
            <person name="Rasko D."/>
            <person name="Buckles E.L."/>
            <person name="Liou S.-R."/>
            <person name="Boutin A."/>
            <person name="Hackett J."/>
            <person name="Stroud D."/>
            <person name="Mayhew G.F."/>
            <person name="Rose D.J."/>
            <person name="Zhou S."/>
            <person name="Schwartz D.C."/>
            <person name="Perna N.T."/>
            <person name="Mobley H.L.T."/>
            <person name="Donnenberg M.S."/>
            <person name="Blattner F.R."/>
        </authorList>
    </citation>
    <scope>NUCLEOTIDE SEQUENCE [LARGE SCALE GENOMIC DNA]</scope>
    <source>
        <strain>CFT073 / ATCC 700928 / UPEC</strain>
    </source>
</reference>
<keyword id="KW-0997">Cell inner membrane</keyword>
<keyword id="KW-1003">Cell membrane</keyword>
<keyword id="KW-0472">Membrane</keyword>
<keyword id="KW-0520">NAD</keyword>
<keyword id="KW-0874">Quinone</keyword>
<keyword id="KW-1185">Reference proteome</keyword>
<keyword id="KW-1278">Translocase</keyword>
<keyword id="KW-0812">Transmembrane</keyword>
<keyword id="KW-1133">Transmembrane helix</keyword>
<keyword id="KW-0813">Transport</keyword>
<keyword id="KW-0830">Ubiquinone</keyword>
<sequence length="485" mass="52072">MTITPQNLIALLPLLIVGLTVVVVMLSIAWRRNHFLNATLSVIGLNAALVSLWFVGQAGAMDVTPLMRVDGFAMLYTGLVLLASLATCTFAYPWLEGYNDNKDEFYLLVLIAALGGILLANANHLASLFLGIELISLPLFGLVGYAFRQKRSLEASIKYTILSAAASSFLLFGMALVYAQSGDLSFVALGKNLGDGMLNEPLLLAGFGLMIVGLGFKLSLVPFHLWTPDVYQGAPAPVSTFLATASKIAIFGVVMRLFLYAPVGDSEAIRVVLAIIAFASIIFGNLMALSQTNIKRLLGYSSISHLGYLLVALIALQTGEMSMEAVGVYLVGYLFSSLGAFGVVSLMSSPYRGPDADSLFSYRGLFWHRPILAAVMTVMMLSLAGIPMTLGFIGKFYVLAVGVQAHLWWLVGAVVVGSAIGLYYYLRVAVSLYLHAPEQPGRDAPSNWQYSAGGIVVLISALLVLVLGVWPQPLISIVRLAMPLM</sequence>
<evidence type="ECO:0000255" key="1">
    <source>
        <dbReference type="HAMAP-Rule" id="MF_00445"/>
    </source>
</evidence>
<protein>
    <recommendedName>
        <fullName evidence="1">NADH-quinone oxidoreductase subunit N</fullName>
        <ecNumber evidence="1">7.1.1.-</ecNumber>
    </recommendedName>
    <alternativeName>
        <fullName evidence="1">NADH dehydrogenase I subunit N</fullName>
    </alternativeName>
    <alternativeName>
        <fullName evidence="1">NDH-1 subunit N</fullName>
    </alternativeName>
</protein>
<organism>
    <name type="scientific">Escherichia coli O6:H1 (strain CFT073 / ATCC 700928 / UPEC)</name>
    <dbReference type="NCBI Taxonomy" id="199310"/>
    <lineage>
        <taxon>Bacteria</taxon>
        <taxon>Pseudomonadati</taxon>
        <taxon>Pseudomonadota</taxon>
        <taxon>Gammaproteobacteria</taxon>
        <taxon>Enterobacterales</taxon>
        <taxon>Enterobacteriaceae</taxon>
        <taxon>Escherichia</taxon>
    </lineage>
</organism>